<sequence>MYISFILFSIIFIFLGVIENFIINKRVLYKPNFLLYSEKKNKKKSTPEQVTTRVNKDLKEKKRKRPRSKILECLLKEKVEKVEKVEKNSDENQCSNVDKEIREGKRVPRLRVRNTNNHIYASIIDDYKKYVLCSTCSRDATLSKILGTYRRKATNRVINNGRTIKSAWEIGKIIGKKALSKGIFKVRFDRARHPYAGKVEALAEGARAVGLLL</sequence>
<accession>Q6LFD5</accession>
<gene>
    <name type="primary">RPL18</name>
    <name type="ORF">PFF0650w</name>
</gene>
<dbReference type="EMBL" id="AL844505">
    <property type="protein sequence ID" value="CAG25373.1"/>
    <property type="molecule type" value="Genomic_DNA"/>
</dbReference>
<dbReference type="RefSeq" id="XP_966121.1">
    <property type="nucleotide sequence ID" value="XM_961028.1"/>
</dbReference>
<dbReference type="SMR" id="Q6LFD5"/>
<dbReference type="FunCoup" id="Q6LFD5">
    <property type="interactions" value="24"/>
</dbReference>
<dbReference type="STRING" id="36329.Q6LFD5"/>
<dbReference type="PaxDb" id="5833-PFF0650w"/>
<dbReference type="EnsemblProtists" id="CAG25373">
    <property type="protein sequence ID" value="CAG25373"/>
    <property type="gene ID" value="PF3D7_0613400"/>
</dbReference>
<dbReference type="KEGG" id="pfa:PF3D7_0613400"/>
<dbReference type="VEuPathDB" id="PlasmoDB:PF3D7_0613400"/>
<dbReference type="HOGENOM" id="CLU_1285551_0_0_1"/>
<dbReference type="InParanoid" id="Q6LFD5"/>
<dbReference type="OMA" id="NRVVNNG"/>
<dbReference type="OrthoDB" id="309483at2759"/>
<dbReference type="PhylomeDB" id="Q6LFD5"/>
<dbReference type="Proteomes" id="UP000001450">
    <property type="component" value="Chromosome 6"/>
</dbReference>
<dbReference type="GO" id="GO:0020011">
    <property type="term" value="C:apicoplast"/>
    <property type="evidence" value="ECO:0000314"/>
    <property type="project" value="GeneDB"/>
</dbReference>
<dbReference type="GO" id="GO:1990904">
    <property type="term" value="C:ribonucleoprotein complex"/>
    <property type="evidence" value="ECO:0007669"/>
    <property type="project" value="UniProtKB-KW"/>
</dbReference>
<dbReference type="GO" id="GO:0005840">
    <property type="term" value="C:ribosome"/>
    <property type="evidence" value="ECO:0000250"/>
    <property type="project" value="GeneDB"/>
</dbReference>
<dbReference type="GO" id="GO:0008097">
    <property type="term" value="F:5S rRNA binding"/>
    <property type="evidence" value="ECO:0000318"/>
    <property type="project" value="GO_Central"/>
</dbReference>
<dbReference type="GO" id="GO:0003735">
    <property type="term" value="F:structural constituent of ribosome"/>
    <property type="evidence" value="ECO:0000250"/>
    <property type="project" value="GeneDB"/>
</dbReference>
<dbReference type="GO" id="GO:0042254">
    <property type="term" value="P:ribosome biogenesis"/>
    <property type="evidence" value="ECO:0000250"/>
    <property type="project" value="GeneDB"/>
</dbReference>
<dbReference type="GO" id="GO:0006412">
    <property type="term" value="P:translation"/>
    <property type="evidence" value="ECO:0007669"/>
    <property type="project" value="InterPro"/>
</dbReference>
<dbReference type="CDD" id="cd00432">
    <property type="entry name" value="Ribosomal_L18_L5e"/>
    <property type="match status" value="1"/>
</dbReference>
<dbReference type="FunFam" id="3.30.420.100:FF:000012">
    <property type="entry name" value="Apicoplast ribosomal protein L18"/>
    <property type="match status" value="1"/>
</dbReference>
<dbReference type="Gene3D" id="3.30.420.100">
    <property type="match status" value="1"/>
</dbReference>
<dbReference type="InterPro" id="IPR005484">
    <property type="entry name" value="Ribosomal_uL18_bac/euk"/>
</dbReference>
<dbReference type="PANTHER" id="PTHR12899">
    <property type="entry name" value="39S RIBOSOMAL PROTEIN L18, MITOCHONDRIAL"/>
    <property type="match status" value="1"/>
</dbReference>
<dbReference type="PANTHER" id="PTHR12899:SF3">
    <property type="entry name" value="LARGE RIBOSOMAL SUBUNIT PROTEIN UL18M"/>
    <property type="match status" value="1"/>
</dbReference>
<dbReference type="Pfam" id="PF00861">
    <property type="entry name" value="Ribosomal_L18p"/>
    <property type="match status" value="1"/>
</dbReference>
<dbReference type="SUPFAM" id="SSF53137">
    <property type="entry name" value="Translational machinery components"/>
    <property type="match status" value="1"/>
</dbReference>
<feature type="transit peptide" description="Apicoplast" evidence="1">
    <location>
        <begin position="1"/>
        <end status="unknown"/>
    </location>
</feature>
<feature type="chain" id="PRO_0000030472" description="Large ribosomal subunit protein uL18c">
    <location>
        <begin status="unknown"/>
        <end position="213"/>
    </location>
</feature>
<protein>
    <recommendedName>
        <fullName evidence="2">Large ribosomal subunit protein uL18c</fullName>
    </recommendedName>
    <alternativeName>
        <fullName evidence="2">50S ribosomal protein L18, apicoplastic</fullName>
    </alternativeName>
</protein>
<evidence type="ECO:0000255" key="1"/>
<evidence type="ECO:0000305" key="2"/>
<comment type="subcellular location">
    <subcellularLocation>
        <location evidence="2">Plastid</location>
        <location evidence="2">Apicoplast</location>
    </subcellularLocation>
</comment>
<comment type="similarity">
    <text evidence="2">Belongs to the universal ribosomal protein uL18 family.</text>
</comment>
<keyword id="KW-0933">Apicoplast</keyword>
<keyword id="KW-0934">Plastid</keyword>
<keyword id="KW-1185">Reference proteome</keyword>
<keyword id="KW-0687">Ribonucleoprotein</keyword>
<keyword id="KW-0689">Ribosomal protein</keyword>
<keyword id="KW-0809">Transit peptide</keyword>
<name>RK18_PLAF7</name>
<reference key="1">
    <citation type="journal article" date="2002" name="Nature">
        <title>Genome sequence of the human malaria parasite Plasmodium falciparum.</title>
        <authorList>
            <person name="Gardner M.J."/>
            <person name="Hall N."/>
            <person name="Fung E."/>
            <person name="White O."/>
            <person name="Berriman M."/>
            <person name="Hyman R.W."/>
            <person name="Carlton J.M."/>
            <person name="Pain A."/>
            <person name="Nelson K.E."/>
            <person name="Bowman S."/>
            <person name="Paulsen I.T."/>
            <person name="James K.D."/>
            <person name="Eisen J.A."/>
            <person name="Rutherford K.M."/>
            <person name="Salzberg S.L."/>
            <person name="Craig A."/>
            <person name="Kyes S."/>
            <person name="Chan M.-S."/>
            <person name="Nene V."/>
            <person name="Shallom S.J."/>
            <person name="Suh B."/>
            <person name="Peterson J."/>
            <person name="Angiuoli S."/>
            <person name="Pertea M."/>
            <person name="Allen J."/>
            <person name="Selengut J."/>
            <person name="Haft D."/>
            <person name="Mather M.W."/>
            <person name="Vaidya A.B."/>
            <person name="Martin D.M.A."/>
            <person name="Fairlamb A.H."/>
            <person name="Fraunholz M.J."/>
            <person name="Roos D.S."/>
            <person name="Ralph S.A."/>
            <person name="McFadden G.I."/>
            <person name="Cummings L.M."/>
            <person name="Subramanian G.M."/>
            <person name="Mungall C."/>
            <person name="Venter J.C."/>
            <person name="Carucci D.J."/>
            <person name="Hoffman S.L."/>
            <person name="Newbold C."/>
            <person name="Davis R.W."/>
            <person name="Fraser C.M."/>
            <person name="Barrell B.G."/>
        </authorList>
    </citation>
    <scope>NUCLEOTIDE SEQUENCE [LARGE SCALE GENOMIC DNA]</scope>
    <source>
        <strain>3D7</strain>
    </source>
</reference>
<reference key="2">
    <citation type="journal article" date="2002" name="Nature">
        <title>Sequence of Plasmodium falciparum chromosomes 1, 3-9 and 13.</title>
        <authorList>
            <person name="Hall N."/>
            <person name="Pain A."/>
            <person name="Berriman M."/>
            <person name="Churcher C.M."/>
            <person name="Harris B."/>
            <person name="Harris D."/>
            <person name="Mungall K.L."/>
            <person name="Bowman S."/>
            <person name="Atkin R."/>
            <person name="Baker S."/>
            <person name="Barron A."/>
            <person name="Brooks K."/>
            <person name="Buckee C.O."/>
            <person name="Burrows C."/>
            <person name="Cherevach I."/>
            <person name="Chillingworth C."/>
            <person name="Chillingworth T."/>
            <person name="Christodoulou Z."/>
            <person name="Clark L."/>
            <person name="Clark R."/>
            <person name="Corton C."/>
            <person name="Cronin A."/>
            <person name="Davies R.M."/>
            <person name="Davis P."/>
            <person name="Dear P."/>
            <person name="Dearden F."/>
            <person name="Doggett J."/>
            <person name="Feltwell T."/>
            <person name="Goble A."/>
            <person name="Goodhead I."/>
            <person name="Gwilliam R."/>
            <person name="Hamlin N."/>
            <person name="Hance Z."/>
            <person name="Harper D."/>
            <person name="Hauser H."/>
            <person name="Hornsby T."/>
            <person name="Holroyd S."/>
            <person name="Horrocks P."/>
            <person name="Humphray S."/>
            <person name="Jagels K."/>
            <person name="James K.D."/>
            <person name="Johnson D."/>
            <person name="Kerhornou A."/>
            <person name="Knights A."/>
            <person name="Konfortov B."/>
            <person name="Kyes S."/>
            <person name="Larke N."/>
            <person name="Lawson D."/>
            <person name="Lennard N."/>
            <person name="Line A."/>
            <person name="Maddison M."/>
            <person name="Mclean J."/>
            <person name="Mooney P."/>
            <person name="Moule S."/>
            <person name="Murphy L."/>
            <person name="Oliver K."/>
            <person name="Ormond D."/>
            <person name="Price C."/>
            <person name="Quail M.A."/>
            <person name="Rabbinowitsch E."/>
            <person name="Rajandream M.A."/>
            <person name="Rutter S."/>
            <person name="Rutherford K.M."/>
            <person name="Sanders M."/>
            <person name="Simmonds M."/>
            <person name="Seeger K."/>
            <person name="Sharp S."/>
            <person name="Smith R."/>
            <person name="Squares R."/>
            <person name="Squares S."/>
            <person name="Stevens K."/>
            <person name="Taylor K."/>
            <person name="Tivey A."/>
            <person name="Unwin L."/>
            <person name="Whitehead S."/>
            <person name="Woodward J.R."/>
            <person name="Sulston J.E."/>
            <person name="Craig A."/>
            <person name="Newbold C."/>
            <person name="Barrell B.G."/>
        </authorList>
    </citation>
    <scope>NUCLEOTIDE SEQUENCE [LARGE SCALE GENOMIC DNA]</scope>
    <source>
        <strain>3D7</strain>
    </source>
</reference>
<proteinExistence type="inferred from homology"/>
<organism>
    <name type="scientific">Plasmodium falciparum (isolate 3D7)</name>
    <dbReference type="NCBI Taxonomy" id="36329"/>
    <lineage>
        <taxon>Eukaryota</taxon>
        <taxon>Sar</taxon>
        <taxon>Alveolata</taxon>
        <taxon>Apicomplexa</taxon>
        <taxon>Aconoidasida</taxon>
        <taxon>Haemosporida</taxon>
        <taxon>Plasmodiidae</taxon>
        <taxon>Plasmodium</taxon>
        <taxon>Plasmodium (Laverania)</taxon>
    </lineage>
</organism>